<comment type="function">
    <text evidence="1">Converts heme B (protoheme IX) to heme O by substitution of the vinyl group on carbon 2 of heme B porphyrin ring with a hydroxyethyl farnesyl side group.</text>
</comment>
<comment type="catalytic activity">
    <reaction evidence="1">
        <text>heme b + (2E,6E)-farnesyl diphosphate + H2O = Fe(II)-heme o + diphosphate</text>
        <dbReference type="Rhea" id="RHEA:28070"/>
        <dbReference type="ChEBI" id="CHEBI:15377"/>
        <dbReference type="ChEBI" id="CHEBI:33019"/>
        <dbReference type="ChEBI" id="CHEBI:60344"/>
        <dbReference type="ChEBI" id="CHEBI:60530"/>
        <dbReference type="ChEBI" id="CHEBI:175763"/>
        <dbReference type="EC" id="2.5.1.141"/>
    </reaction>
</comment>
<comment type="pathway">
    <text evidence="1">Porphyrin-containing compound metabolism; heme O biosynthesis; heme O from protoheme: step 1/1.</text>
</comment>
<comment type="subcellular location">
    <subcellularLocation>
        <location evidence="1">Cell inner membrane</location>
        <topology evidence="1">Multi-pass membrane protein</topology>
    </subcellularLocation>
</comment>
<comment type="miscellaneous">
    <text evidence="1">Carbon 2 of the heme B porphyrin ring is defined according to the Fischer nomenclature.</text>
</comment>
<comment type="similarity">
    <text evidence="1">Belongs to the UbiA prenyltransferase family. Protoheme IX farnesyltransferase subfamily.</text>
</comment>
<protein>
    <recommendedName>
        <fullName evidence="1">Protoheme IX farnesyltransferase 1</fullName>
        <ecNumber evidence="1">2.5.1.141</ecNumber>
    </recommendedName>
    <alternativeName>
        <fullName evidence="1">Heme B farnesyltransferase 1</fullName>
    </alternativeName>
    <alternativeName>
        <fullName evidence="1">Heme O synthase 1</fullName>
    </alternativeName>
</protein>
<evidence type="ECO:0000255" key="1">
    <source>
        <dbReference type="HAMAP-Rule" id="MF_00154"/>
    </source>
</evidence>
<accession>A6WU15</accession>
<sequence>MAKPLSITSSLPTFSVTWRAYFEMTKPKVVALMLLTVLVGMCLAVPHAVPVQPLLAGMLGIAMMAGSAAALNHLIDRRIDGLMARTYNRPLPKGRISATRALIFAASLGSLGFIVLYSLVNPLTAWLTFASLIGYALVYTAYLKRATSQNIVIGGLAGAMPPLLGWTAVTNEFHGHALLLVIIIFTWTPPHFWALAIHRRAEYAKVDIPMLPVTHGVEFTKTCILLYTVLLAIACLLPVLVGMCGPVYFVCSSLLSTGFIYKAWQLKYRDHDGSAMQVFRFSIYHLMLLFMALLLDHYLWN</sequence>
<reference key="1">
    <citation type="submission" date="2007-07" db="EMBL/GenBank/DDBJ databases">
        <title>Complete sequence of chromosome of Shewanella baltica OS185.</title>
        <authorList>
            <consortium name="US DOE Joint Genome Institute"/>
            <person name="Copeland A."/>
            <person name="Lucas S."/>
            <person name="Lapidus A."/>
            <person name="Barry K."/>
            <person name="Glavina del Rio T."/>
            <person name="Dalin E."/>
            <person name="Tice H."/>
            <person name="Pitluck S."/>
            <person name="Sims D."/>
            <person name="Brettin T."/>
            <person name="Bruce D."/>
            <person name="Detter J.C."/>
            <person name="Han C."/>
            <person name="Schmutz J."/>
            <person name="Larimer F."/>
            <person name="Land M."/>
            <person name="Hauser L."/>
            <person name="Kyrpides N."/>
            <person name="Mikhailova N."/>
            <person name="Brettar I."/>
            <person name="Rodrigues J."/>
            <person name="Konstantinidis K."/>
            <person name="Tiedje J."/>
            <person name="Richardson P."/>
        </authorList>
    </citation>
    <scope>NUCLEOTIDE SEQUENCE [LARGE SCALE GENOMIC DNA]</scope>
    <source>
        <strain>OS185</strain>
    </source>
</reference>
<keyword id="KW-0997">Cell inner membrane</keyword>
<keyword id="KW-1003">Cell membrane</keyword>
<keyword id="KW-0350">Heme biosynthesis</keyword>
<keyword id="KW-0472">Membrane</keyword>
<keyword id="KW-0808">Transferase</keyword>
<keyword id="KW-0812">Transmembrane</keyword>
<keyword id="KW-1133">Transmembrane helix</keyword>
<feature type="chain" id="PRO_0000326942" description="Protoheme IX farnesyltransferase 1">
    <location>
        <begin position="1"/>
        <end position="301"/>
    </location>
</feature>
<feature type="transmembrane region" description="Helical" evidence="1">
    <location>
        <begin position="29"/>
        <end position="49"/>
    </location>
</feature>
<feature type="transmembrane region" description="Helical" evidence="1">
    <location>
        <begin position="51"/>
        <end position="71"/>
    </location>
</feature>
<feature type="transmembrane region" description="Helical" evidence="1">
    <location>
        <begin position="101"/>
        <end position="121"/>
    </location>
</feature>
<feature type="transmembrane region" description="Helical" evidence="1">
    <location>
        <begin position="123"/>
        <end position="143"/>
    </location>
</feature>
<feature type="transmembrane region" description="Helical" evidence="1">
    <location>
        <begin position="150"/>
        <end position="170"/>
    </location>
</feature>
<feature type="transmembrane region" description="Helical" evidence="1">
    <location>
        <begin position="177"/>
        <end position="197"/>
    </location>
</feature>
<feature type="transmembrane region" description="Helical" evidence="1">
    <location>
        <begin position="223"/>
        <end position="243"/>
    </location>
</feature>
<feature type="transmembrane region" description="Helical" evidence="1">
    <location>
        <begin position="244"/>
        <end position="264"/>
    </location>
</feature>
<feature type="transmembrane region" description="Helical" evidence="1">
    <location>
        <begin position="275"/>
        <end position="295"/>
    </location>
</feature>
<organism>
    <name type="scientific">Shewanella baltica (strain OS185)</name>
    <dbReference type="NCBI Taxonomy" id="402882"/>
    <lineage>
        <taxon>Bacteria</taxon>
        <taxon>Pseudomonadati</taxon>
        <taxon>Pseudomonadota</taxon>
        <taxon>Gammaproteobacteria</taxon>
        <taxon>Alteromonadales</taxon>
        <taxon>Shewanellaceae</taxon>
        <taxon>Shewanella</taxon>
    </lineage>
</organism>
<gene>
    <name evidence="1" type="primary">cyoE1</name>
    <name type="ordered locus">Shew185_4188</name>
</gene>
<name>CYOE1_SHEB8</name>
<dbReference type="EC" id="2.5.1.141" evidence="1"/>
<dbReference type="EMBL" id="CP000753">
    <property type="protein sequence ID" value="ABS10304.1"/>
    <property type="molecule type" value="Genomic_DNA"/>
</dbReference>
<dbReference type="RefSeq" id="WP_012090556.1">
    <property type="nucleotide sequence ID" value="NC_009665.1"/>
</dbReference>
<dbReference type="SMR" id="A6WU15"/>
<dbReference type="KEGG" id="sbm:Shew185_4188"/>
<dbReference type="HOGENOM" id="CLU_029631_0_2_6"/>
<dbReference type="UniPathway" id="UPA00834">
    <property type="reaction ID" value="UER00712"/>
</dbReference>
<dbReference type="GO" id="GO:0005886">
    <property type="term" value="C:plasma membrane"/>
    <property type="evidence" value="ECO:0007669"/>
    <property type="project" value="UniProtKB-SubCell"/>
</dbReference>
<dbReference type="GO" id="GO:0008495">
    <property type="term" value="F:protoheme IX farnesyltransferase activity"/>
    <property type="evidence" value="ECO:0007669"/>
    <property type="project" value="UniProtKB-UniRule"/>
</dbReference>
<dbReference type="GO" id="GO:0048034">
    <property type="term" value="P:heme O biosynthetic process"/>
    <property type="evidence" value="ECO:0007669"/>
    <property type="project" value="UniProtKB-UniRule"/>
</dbReference>
<dbReference type="CDD" id="cd13957">
    <property type="entry name" value="PT_UbiA_Cox10"/>
    <property type="match status" value="1"/>
</dbReference>
<dbReference type="FunFam" id="1.10.357.140:FF:000001">
    <property type="entry name" value="Protoheme IX farnesyltransferase"/>
    <property type="match status" value="1"/>
</dbReference>
<dbReference type="Gene3D" id="1.10.357.140">
    <property type="entry name" value="UbiA prenyltransferase"/>
    <property type="match status" value="1"/>
</dbReference>
<dbReference type="HAMAP" id="MF_00154">
    <property type="entry name" value="CyoE_CtaB"/>
    <property type="match status" value="1"/>
</dbReference>
<dbReference type="InterPro" id="IPR006369">
    <property type="entry name" value="Protohaem_IX_farnesylTrfase"/>
</dbReference>
<dbReference type="InterPro" id="IPR000537">
    <property type="entry name" value="UbiA_prenyltransferase"/>
</dbReference>
<dbReference type="InterPro" id="IPR030470">
    <property type="entry name" value="UbiA_prenylTrfase_CS"/>
</dbReference>
<dbReference type="InterPro" id="IPR044878">
    <property type="entry name" value="UbiA_sf"/>
</dbReference>
<dbReference type="NCBIfam" id="TIGR01473">
    <property type="entry name" value="cyoE_ctaB"/>
    <property type="match status" value="1"/>
</dbReference>
<dbReference type="NCBIfam" id="NF003349">
    <property type="entry name" value="PRK04375.1-2"/>
    <property type="match status" value="1"/>
</dbReference>
<dbReference type="PANTHER" id="PTHR43448:SF7">
    <property type="entry name" value="4-HYDROXYBENZOATE SOLANESYLTRANSFERASE"/>
    <property type="match status" value="1"/>
</dbReference>
<dbReference type="PANTHER" id="PTHR43448">
    <property type="entry name" value="PROTOHEME IX FARNESYLTRANSFERASE, MITOCHONDRIAL"/>
    <property type="match status" value="1"/>
</dbReference>
<dbReference type="Pfam" id="PF01040">
    <property type="entry name" value="UbiA"/>
    <property type="match status" value="1"/>
</dbReference>
<dbReference type="PROSITE" id="PS00943">
    <property type="entry name" value="UBIA"/>
    <property type="match status" value="1"/>
</dbReference>
<proteinExistence type="inferred from homology"/>